<organism>
    <name type="scientific">Haemophilus influenzae (strain ATCC 51907 / DSM 11121 / KW20 / Rd)</name>
    <dbReference type="NCBI Taxonomy" id="71421"/>
    <lineage>
        <taxon>Bacteria</taxon>
        <taxon>Pseudomonadati</taxon>
        <taxon>Pseudomonadota</taxon>
        <taxon>Gammaproteobacteria</taxon>
        <taxon>Pasteurellales</taxon>
        <taxon>Pasteurellaceae</taxon>
        <taxon>Haemophilus</taxon>
    </lineage>
</organism>
<proteinExistence type="predicted"/>
<accession>P44247</accession>
<gene>
    <name type="ordered locus">HI_1536</name>
</gene>
<feature type="chain" id="PRO_0000078083" description="Uncharacterized protein HI_1536">
    <location>
        <begin position="1"/>
        <end position="115"/>
    </location>
</feature>
<protein>
    <recommendedName>
        <fullName>Uncharacterized protein HI_1536</fullName>
    </recommendedName>
</protein>
<reference key="1">
    <citation type="journal article" date="1995" name="Science">
        <title>Whole-genome random sequencing and assembly of Haemophilus influenzae Rd.</title>
        <authorList>
            <person name="Fleischmann R.D."/>
            <person name="Adams M.D."/>
            <person name="White O."/>
            <person name="Clayton R.A."/>
            <person name="Kirkness E.F."/>
            <person name="Kerlavage A.R."/>
            <person name="Bult C.J."/>
            <person name="Tomb J.-F."/>
            <person name="Dougherty B.A."/>
            <person name="Merrick J.M."/>
            <person name="McKenney K."/>
            <person name="Sutton G.G."/>
            <person name="FitzHugh W."/>
            <person name="Fields C.A."/>
            <person name="Gocayne J.D."/>
            <person name="Scott J.D."/>
            <person name="Shirley R."/>
            <person name="Liu L.-I."/>
            <person name="Glodek A."/>
            <person name="Kelley J.M."/>
            <person name="Weidman J.F."/>
            <person name="Phillips C.A."/>
            <person name="Spriggs T."/>
            <person name="Hedblom E."/>
            <person name="Cotton M.D."/>
            <person name="Utterback T.R."/>
            <person name="Hanna M.C."/>
            <person name="Nguyen D.T."/>
            <person name="Saudek D.M."/>
            <person name="Brandon R.C."/>
            <person name="Fine L.D."/>
            <person name="Fritchman J.L."/>
            <person name="Fuhrmann J.L."/>
            <person name="Geoghagen N.S.M."/>
            <person name="Gnehm C.L."/>
            <person name="McDonald L.A."/>
            <person name="Small K.V."/>
            <person name="Fraser C.M."/>
            <person name="Smith H.O."/>
            <person name="Venter J.C."/>
        </authorList>
    </citation>
    <scope>NUCLEOTIDE SEQUENCE [LARGE SCALE GENOMIC DNA]</scope>
    <source>
        <strain>ATCC 51907 / DSM 11121 / KW20 / Rd</strain>
    </source>
</reference>
<dbReference type="EMBL" id="L42023">
    <property type="protein sequence ID" value="AAC23186.1"/>
    <property type="molecule type" value="Genomic_DNA"/>
</dbReference>
<dbReference type="PIR" id="E64035">
    <property type="entry name" value="E64035"/>
</dbReference>
<dbReference type="SMR" id="P44247"/>
<dbReference type="STRING" id="71421.HI_1536"/>
<dbReference type="EnsemblBacteria" id="AAC23186">
    <property type="protein sequence ID" value="AAC23186"/>
    <property type="gene ID" value="HI_1536"/>
</dbReference>
<dbReference type="KEGG" id="hin:HI_1536"/>
<dbReference type="eggNOG" id="COG0665">
    <property type="taxonomic scope" value="Bacteria"/>
</dbReference>
<dbReference type="HOGENOM" id="CLU_134440_0_0_6"/>
<dbReference type="Proteomes" id="UP000000579">
    <property type="component" value="Chromosome"/>
</dbReference>
<dbReference type="Gene3D" id="3.30.9.10">
    <property type="entry name" value="D-Amino Acid Oxidase, subunit A, domain 2"/>
    <property type="match status" value="1"/>
</dbReference>
<dbReference type="Gene3D" id="3.50.50.60">
    <property type="entry name" value="FAD/NAD(P)-binding domain"/>
    <property type="match status" value="1"/>
</dbReference>
<dbReference type="InterPro" id="IPR036188">
    <property type="entry name" value="FAD/NAD-bd_sf"/>
</dbReference>
<keyword id="KW-1185">Reference proteome</keyword>
<sequence length="115" mass="12779">MDTSDNLARVGIRCSVRDLAPMVGNVPHFEQQQADYYNLFNLRRRKQPIQSAANFQNLFLIAALGSRGLTSAPLLGETLASIIYGEPLPISEGILHNLSANRAWVKKWLKGSKVE</sequence>
<name>Y1536_HAEIN</name>